<sequence>MASSQVGDMVNGNAEPTRHLAKFPPSLWGDRFTSFTLDKQLWDKYGNEIEVLKEQVRSMVVAGGRKAAEQINLINVLERLGVSYHFEKEIEEQLEQLFAKFEDNEDYDLFTIALHFRIFRQHGYKMSCDVFNKFRDSNGEFKETVSNDVRGMLSLYEATYLKIRGEGFLDEAHAFTIAQLESLVGGPHLSSDLSEQVMHALKQSIHRGFPRLEAKHFISFYEKDAARNETLLRLAKLDFNQLQLSHREELCHIFRWWKELDLISKVPYARDRAVECFFWSTCAYYEPQHSVGRAVLTKIVLLLSVTDDTYDAYGTYDELKLYTNAVQRWDASAMDELPDYMKTLYRALLNVYDEVERDLAKQGRAYGVHHSKEAFKEIVRSYEIEAEWFKEGYVASFEEYMKNALVTSTGRLHTTSCFMGLEADVATTEAFEWILTKPKMVAASGAIGRLVDDVMSNDEEQERGHVATGLDCYMKQHGVSKQEAIVELYKMIENAWRDINEEMLKPTAISMKLLIHVLNLSRISDVVYKYVDGYTHPEIIKDHVISLFEDPIPM</sequence>
<comment type="function">
    <text evidence="2 5">Sesquiterpene synthase that catalyzes the formation of sesquiterpenes and sesquiterpenoid alcohols (PubMed:26744017). Converts farnesyl diphosphate (FPP) to hedycaryol (PubMed:26744017). Hedycaryol is likely to be one of the terpenes that attract insects for pollination of Camellia brevistyla (Probable).</text>
</comment>
<comment type="catalytic activity">
    <reaction evidence="2">
        <text>(2E,6E)-farnesyl diphosphate + H2O = (2E,6E)-hedycaryol + diphosphate</text>
        <dbReference type="Rhea" id="RHEA:54056"/>
        <dbReference type="ChEBI" id="CHEBI:15377"/>
        <dbReference type="ChEBI" id="CHEBI:33019"/>
        <dbReference type="ChEBI" id="CHEBI:138043"/>
        <dbReference type="ChEBI" id="CHEBI:175763"/>
        <dbReference type="EC" id="4.2.3.174"/>
    </reaction>
    <physiologicalReaction direction="left-to-right" evidence="2">
        <dbReference type="Rhea" id="RHEA:54057"/>
    </physiologicalReaction>
</comment>
<comment type="cofactor">
    <cofactor evidence="1">
        <name>Mg(2+)</name>
        <dbReference type="ChEBI" id="CHEBI:18420"/>
    </cofactor>
    <text evidence="1">Binds 3 Mg(2+) ions per subunit.</text>
</comment>
<comment type="pathway">
    <text evidence="4">Secondary metabolite biosynthesis; terpenoid biosynthesis.</text>
</comment>
<comment type="tissue specificity">
    <text evidence="2">Specifically expressed in flowers.</text>
</comment>
<comment type="domain">
    <text evidence="4">The Asp-Asp-Xaa-Xaa-Asp/Glu (DDXXD/E) motif is important for the catalytic activity, presumably through binding to Mg(2+).</text>
</comment>
<comment type="similarity">
    <text evidence="4">Belongs to the terpene synthase family.</text>
</comment>
<organism>
    <name type="scientific">Camellia brevistyla</name>
    <dbReference type="NCBI Taxonomy" id="296050"/>
    <lineage>
        <taxon>Eukaryota</taxon>
        <taxon>Viridiplantae</taxon>
        <taxon>Streptophyta</taxon>
        <taxon>Embryophyta</taxon>
        <taxon>Tracheophyta</taxon>
        <taxon>Spermatophyta</taxon>
        <taxon>Magnoliopsida</taxon>
        <taxon>eudicotyledons</taxon>
        <taxon>Gunneridae</taxon>
        <taxon>Pentapetalae</taxon>
        <taxon>asterids</taxon>
        <taxon>Ericales</taxon>
        <taxon>Theaceae</taxon>
        <taxon>Camellia</taxon>
    </lineage>
</organism>
<protein>
    <recommendedName>
        <fullName evidence="3">Hedycaryol synthase</fullName>
        <ecNumber evidence="2">4.2.3.174</ecNumber>
    </recommendedName>
    <alternativeName>
        <fullName evidence="4">(2E,6E)-hedycaryol synthase</fullName>
    </alternativeName>
    <alternativeName>
        <fullName evidence="3">Terpene synthase 1</fullName>
        <shortName evidence="3">CbTps1</shortName>
    </alternativeName>
</protein>
<gene>
    <name evidence="3" type="primary">TPS1</name>
</gene>
<dbReference type="EC" id="4.2.3.174" evidence="2"/>
<dbReference type="EMBL" id="LC070683">
    <property type="protein sequence ID" value="BAU68096.1"/>
    <property type="molecule type" value="mRNA"/>
</dbReference>
<dbReference type="SMR" id="A0A140KFG9"/>
<dbReference type="KEGG" id="ag:BAU68096"/>
<dbReference type="BRENDA" id="4.2.3.174">
    <property type="organism ID" value="15336"/>
</dbReference>
<dbReference type="UniPathway" id="UPA00213"/>
<dbReference type="GO" id="GO:0000287">
    <property type="term" value="F:magnesium ion binding"/>
    <property type="evidence" value="ECO:0007669"/>
    <property type="project" value="InterPro"/>
</dbReference>
<dbReference type="GO" id="GO:0010334">
    <property type="term" value="F:sesquiterpene synthase activity"/>
    <property type="evidence" value="ECO:0000314"/>
    <property type="project" value="UniProtKB"/>
</dbReference>
<dbReference type="GO" id="GO:0016102">
    <property type="term" value="P:diterpenoid biosynthetic process"/>
    <property type="evidence" value="ECO:0007669"/>
    <property type="project" value="InterPro"/>
</dbReference>
<dbReference type="GO" id="GO:0051762">
    <property type="term" value="P:sesquiterpene biosynthetic process"/>
    <property type="evidence" value="ECO:0000314"/>
    <property type="project" value="UniProtKB"/>
</dbReference>
<dbReference type="CDD" id="cd00684">
    <property type="entry name" value="Terpene_cyclase_plant_C1"/>
    <property type="match status" value="1"/>
</dbReference>
<dbReference type="FunFam" id="1.10.600.10:FF:000007">
    <property type="entry name" value="Isoprene synthase, chloroplastic"/>
    <property type="match status" value="1"/>
</dbReference>
<dbReference type="FunFam" id="1.50.10.130:FF:000001">
    <property type="entry name" value="Isoprene synthase, chloroplastic"/>
    <property type="match status" value="1"/>
</dbReference>
<dbReference type="Gene3D" id="1.10.600.10">
    <property type="entry name" value="Farnesyl Diphosphate Synthase"/>
    <property type="match status" value="1"/>
</dbReference>
<dbReference type="Gene3D" id="1.50.10.130">
    <property type="entry name" value="Terpene synthase, N-terminal domain"/>
    <property type="match status" value="1"/>
</dbReference>
<dbReference type="InterPro" id="IPR008949">
    <property type="entry name" value="Isoprenoid_synthase_dom_sf"/>
</dbReference>
<dbReference type="InterPro" id="IPR034741">
    <property type="entry name" value="Terpene_cyclase-like_1_C"/>
</dbReference>
<dbReference type="InterPro" id="IPR044814">
    <property type="entry name" value="Terpene_cyclase_plant_C1"/>
</dbReference>
<dbReference type="InterPro" id="IPR001906">
    <property type="entry name" value="Terpene_synth_N"/>
</dbReference>
<dbReference type="InterPro" id="IPR036965">
    <property type="entry name" value="Terpene_synth_N_sf"/>
</dbReference>
<dbReference type="InterPro" id="IPR050148">
    <property type="entry name" value="Terpene_synthase-like"/>
</dbReference>
<dbReference type="InterPro" id="IPR005630">
    <property type="entry name" value="Terpene_synthase_metal-bd"/>
</dbReference>
<dbReference type="InterPro" id="IPR008930">
    <property type="entry name" value="Terpenoid_cyclase/PrenylTrfase"/>
</dbReference>
<dbReference type="PANTHER" id="PTHR31225:SF93">
    <property type="entry name" value="ALPHA-HUMULENE_(-)-(E)-BETA-CARYOPHYLLENE SYNTHASE"/>
    <property type="match status" value="1"/>
</dbReference>
<dbReference type="PANTHER" id="PTHR31225">
    <property type="entry name" value="OS04G0344100 PROTEIN-RELATED"/>
    <property type="match status" value="1"/>
</dbReference>
<dbReference type="Pfam" id="PF01397">
    <property type="entry name" value="Terpene_synth"/>
    <property type="match status" value="1"/>
</dbReference>
<dbReference type="Pfam" id="PF03936">
    <property type="entry name" value="Terpene_synth_C"/>
    <property type="match status" value="1"/>
</dbReference>
<dbReference type="SFLD" id="SFLDS00005">
    <property type="entry name" value="Isoprenoid_Synthase_Type_I"/>
    <property type="match status" value="1"/>
</dbReference>
<dbReference type="SFLD" id="SFLDG01019">
    <property type="entry name" value="Terpene_Cyclase_Like_1_C_Termi"/>
    <property type="match status" value="1"/>
</dbReference>
<dbReference type="SUPFAM" id="SSF48239">
    <property type="entry name" value="Terpenoid cyclases/Protein prenyltransferases"/>
    <property type="match status" value="1"/>
</dbReference>
<dbReference type="SUPFAM" id="SSF48576">
    <property type="entry name" value="Terpenoid synthases"/>
    <property type="match status" value="1"/>
</dbReference>
<feature type="chain" id="PRO_0000452462" description="Hedycaryol synthase">
    <location>
        <begin position="1"/>
        <end position="554"/>
    </location>
</feature>
<feature type="short sequence motif" description="DDXXD motif" evidence="4">
    <location>
        <begin position="307"/>
        <end position="311"/>
    </location>
</feature>
<feature type="binding site" evidence="1">
    <location>
        <position position="270"/>
    </location>
    <ligand>
        <name>(2E,6E)-farnesyl diphosphate</name>
        <dbReference type="ChEBI" id="CHEBI:175763"/>
    </ligand>
</feature>
<feature type="binding site" evidence="1">
    <location>
        <position position="307"/>
    </location>
    <ligand>
        <name>(2E,6E)-farnesyl diphosphate</name>
        <dbReference type="ChEBI" id="CHEBI:175763"/>
    </ligand>
</feature>
<feature type="binding site" evidence="1">
    <location>
        <position position="307"/>
    </location>
    <ligand>
        <name>Mg(2+)</name>
        <dbReference type="ChEBI" id="CHEBI:18420"/>
        <label>1</label>
    </ligand>
</feature>
<feature type="binding site" evidence="1">
    <location>
        <position position="307"/>
    </location>
    <ligand>
        <name>Mg(2+)</name>
        <dbReference type="ChEBI" id="CHEBI:18420"/>
        <label>2</label>
    </ligand>
</feature>
<feature type="binding site" evidence="1">
    <location>
        <position position="311"/>
    </location>
    <ligand>
        <name>(2E,6E)-farnesyl diphosphate</name>
        <dbReference type="ChEBI" id="CHEBI:175763"/>
    </ligand>
</feature>
<feature type="binding site" evidence="1">
    <location>
        <position position="311"/>
    </location>
    <ligand>
        <name>Mg(2+)</name>
        <dbReference type="ChEBI" id="CHEBI:18420"/>
        <label>1</label>
    </ligand>
</feature>
<feature type="binding site" evidence="1">
    <location>
        <position position="311"/>
    </location>
    <ligand>
        <name>Mg(2+)</name>
        <dbReference type="ChEBI" id="CHEBI:18420"/>
        <label>2</label>
    </ligand>
</feature>
<feature type="binding site" evidence="1">
    <location>
        <position position="449"/>
    </location>
    <ligand>
        <name>(2E,6E)-farnesyl diphosphate</name>
        <dbReference type="ChEBI" id="CHEBI:175763"/>
    </ligand>
</feature>
<feature type="binding site" evidence="1">
    <location>
        <position position="452"/>
    </location>
    <ligand>
        <name>(2E,6E)-farnesyl diphosphate</name>
        <dbReference type="ChEBI" id="CHEBI:175763"/>
    </ligand>
</feature>
<feature type="binding site" evidence="1">
    <location>
        <position position="452"/>
    </location>
    <ligand>
        <name>Mg(2+)</name>
        <dbReference type="ChEBI" id="CHEBI:18420"/>
        <label>3</label>
    </ligand>
</feature>
<feature type="binding site" evidence="1">
    <location>
        <position position="456"/>
    </location>
    <ligand>
        <name>Mg(2+)</name>
        <dbReference type="ChEBI" id="CHEBI:18420"/>
        <label>3</label>
    </ligand>
</feature>
<feature type="binding site" evidence="1">
    <location>
        <position position="460"/>
    </location>
    <ligand>
        <name>Mg(2+)</name>
        <dbReference type="ChEBI" id="CHEBI:18420"/>
        <label>3</label>
    </ligand>
</feature>
<reference key="1">
    <citation type="journal article" date="2016" name="Planta">
        <title>Identification of a novel hedycaryol synthase gene isolated from Camellia brevistyla flowers and floral scent of Camellia cultivars.</title>
        <authorList>
            <person name="Hattan J."/>
            <person name="Shindo K."/>
            <person name="Ito T."/>
            <person name="Shibuya Y."/>
            <person name="Watanabe A."/>
            <person name="Tagaki C."/>
            <person name="Ohno F."/>
            <person name="Sasaki T."/>
            <person name="Ishii J."/>
            <person name="Kondo A."/>
            <person name="Misawa N."/>
        </authorList>
    </citation>
    <scope>NUCLEOTIDE SEQUENCE [MRNA]</scope>
    <scope>FUNCTION</scope>
    <scope>CATALYTIC ACTIVITY</scope>
    <scope>TISSUE SPECIFICITY</scope>
</reference>
<proteinExistence type="evidence at protein level"/>
<evidence type="ECO:0000250" key="1">
    <source>
        <dbReference type="UniProtKB" id="Q40577"/>
    </source>
</evidence>
<evidence type="ECO:0000269" key="2">
    <source>
    </source>
</evidence>
<evidence type="ECO:0000303" key="3">
    <source>
    </source>
</evidence>
<evidence type="ECO:0000305" key="4"/>
<evidence type="ECO:0000305" key="5">
    <source>
    </source>
</evidence>
<name>TPS1_CAMBE</name>
<accession>A0A140KFG9</accession>
<keyword id="KW-0456">Lyase</keyword>
<keyword id="KW-0460">Magnesium</keyword>
<keyword id="KW-0479">Metal-binding</keyword>